<keyword id="KW-0240">DNA-directed RNA polymerase</keyword>
<keyword id="KW-0548">Nucleotidyltransferase</keyword>
<keyword id="KW-1185">Reference proteome</keyword>
<keyword id="KW-0804">Transcription</keyword>
<keyword id="KW-0808">Transferase</keyword>
<proteinExistence type="inferred from homology"/>
<reference key="1">
    <citation type="journal article" date="2002" name="Proc. Natl. Acad. Sci. U.S.A.">
        <title>Genome sequence of Streptococcus mutans UA159, a cariogenic dental pathogen.</title>
        <authorList>
            <person name="Ajdic D.J."/>
            <person name="McShan W.M."/>
            <person name="McLaughlin R.E."/>
            <person name="Savic G."/>
            <person name="Chang J."/>
            <person name="Carson M.B."/>
            <person name="Primeaux C."/>
            <person name="Tian R."/>
            <person name="Kenton S."/>
            <person name="Jia H.G."/>
            <person name="Lin S.P."/>
            <person name="Qian Y."/>
            <person name="Li S."/>
            <person name="Zhu H."/>
            <person name="Najar F.Z."/>
            <person name="Lai H."/>
            <person name="White J."/>
            <person name="Roe B.A."/>
            <person name="Ferretti J.J."/>
        </authorList>
    </citation>
    <scope>NUCLEOTIDE SEQUENCE [LARGE SCALE GENOMIC DNA]</scope>
    <source>
        <strain>ATCC 700610 / UA159</strain>
    </source>
</reference>
<gene>
    <name evidence="1" type="primary">rpoB</name>
    <name type="ordered locus">SMU_1990</name>
</gene>
<protein>
    <recommendedName>
        <fullName evidence="1">DNA-directed RNA polymerase subunit beta</fullName>
        <shortName evidence="1">RNAP subunit beta</shortName>
        <ecNumber evidence="1">2.7.7.6</ecNumber>
    </recommendedName>
    <alternativeName>
        <fullName evidence="1">RNA polymerase subunit beta</fullName>
    </alternativeName>
    <alternativeName>
        <fullName evidence="1">Transcriptase subunit beta</fullName>
    </alternativeName>
</protein>
<feature type="chain" id="PRO_0000047973" description="DNA-directed RNA polymerase subunit beta">
    <location>
        <begin position="1"/>
        <end position="1187"/>
    </location>
</feature>
<evidence type="ECO:0000255" key="1">
    <source>
        <dbReference type="HAMAP-Rule" id="MF_01321"/>
    </source>
</evidence>
<name>RPOB_STRMU</name>
<sequence length="1187" mass="132717">MAGHEVQYGKHRTRRSFSRIKEVLDLPNLIEIQTDSFKDFLDTGLKEVFEDVLPISNFTDTMELEFVGYELKEPKYTLEEARAHDAHYSAPIFVTFRLINKETGEIKTQEVFFGDFPLMTEMGTFIINGAERIIVSQLVRSPGVYFNDKVDKNGKIGYGSTVIPNRGAWLELETDSKDIAYTRIDRTRKIPFTTLVRALGFSGDDEIIDIFGDSELVRNTIEKDIHKNPNDSRTDEALKEIYERLRPGEPKTADSSRSLLIARFFDARRYDLAAVGRYKINKKLNVKTRLLNQVIAENLVDPETGEILVEAGTEMTRSVIDSIADYLDGDLNKIVYTPNEYAVLTEPVVLQKFKVMAPNDPDRTVTVIGNASPDDKVRHLTPADILAEMSYFLNLAEGLGKVDDIDHLGNRRIRAVGELLANQFRIGLARMERNVRERMSVQDNEVLTPQQIINIRPVTAAIKEFFGSSQLSQFMDQHNPLSELSHKRRLSALGPGGLTRDRAGYEVRDVHYTHYGRMCPIETPEGPNIGLINNLSSYGHLNKYGFIQTPYRKVDRETGKVTNEIEWLTADEEDEFTVAQANSKLNEDGSFAEEIVMGRHQGNNQEFPASSVEYMDVSPKQVVAVATACIPFLENDDSNRALMGANMQRQAVPLIDPKAPFVGTGMEYQAAHDSGAAIIAQHNGKVVYSDADKIEVRREDGSLDVYHVTKFRRSNSGTAYNQRTLVRVGDSVEKGDFIADGPSMEKGEMALGQNPVVAYMTWEGYNFEDAVIMSERLVKDDVYTSVHLEEFESETRDTKLGPEEITREIPNVGEDALKDLDEMGIIRIGAEVKEGDILVGKVTPKGEKDLSAEERLLHAIFGDKSREVRDTSLRVPHGGDGVVCDVKIFTRANGDELQSGVNMLVRVYIAQKRKIKVGDKMAGRHGNKGVVSRIVPVEDMPYLPDGTPVDIMLNPLGVPSRMNIGQVMELHLGMAARNLGIHIATPVFDGATSDDLWETVKEAGMDSDAKTVLYDGRTGEPFDNRVSVGVMYMIKLHHMVDDKLHARSVGPYSTITQQPLGGKAQFGGQRFGEMEVWALEAYGASNVLQEILTYKSDDVTGRLKAYEAITKGKPIPKPGVPESFRVLVKELQSLGLDMRVLDKDDKEVDLRDLDEGEDDDVMHVDDLEKAREKQALEAAEFANSDEK</sequence>
<accession>Q8DS46</accession>
<dbReference type="EC" id="2.7.7.6" evidence="1"/>
<dbReference type="EMBL" id="AE014133">
    <property type="protein sequence ID" value="AAN59594.1"/>
    <property type="molecule type" value="Genomic_DNA"/>
</dbReference>
<dbReference type="RefSeq" id="NP_722288.1">
    <property type="nucleotide sequence ID" value="NC_004350.2"/>
</dbReference>
<dbReference type="RefSeq" id="WP_002263432.1">
    <property type="nucleotide sequence ID" value="NC_004350.2"/>
</dbReference>
<dbReference type="SMR" id="Q8DS46"/>
<dbReference type="STRING" id="210007.SMU_1990"/>
<dbReference type="GeneID" id="93858625"/>
<dbReference type="KEGG" id="smu:SMU_1990"/>
<dbReference type="PATRIC" id="fig|210007.7.peg.1771"/>
<dbReference type="eggNOG" id="COG0085">
    <property type="taxonomic scope" value="Bacteria"/>
</dbReference>
<dbReference type="HOGENOM" id="CLU_000524_4_1_9"/>
<dbReference type="OrthoDB" id="9803954at2"/>
<dbReference type="PhylomeDB" id="Q8DS46"/>
<dbReference type="Proteomes" id="UP000002512">
    <property type="component" value="Chromosome"/>
</dbReference>
<dbReference type="GO" id="GO:0000428">
    <property type="term" value="C:DNA-directed RNA polymerase complex"/>
    <property type="evidence" value="ECO:0007669"/>
    <property type="project" value="UniProtKB-KW"/>
</dbReference>
<dbReference type="GO" id="GO:0003677">
    <property type="term" value="F:DNA binding"/>
    <property type="evidence" value="ECO:0007669"/>
    <property type="project" value="UniProtKB-UniRule"/>
</dbReference>
<dbReference type="GO" id="GO:0003899">
    <property type="term" value="F:DNA-directed RNA polymerase activity"/>
    <property type="evidence" value="ECO:0007669"/>
    <property type="project" value="UniProtKB-UniRule"/>
</dbReference>
<dbReference type="GO" id="GO:0032549">
    <property type="term" value="F:ribonucleoside binding"/>
    <property type="evidence" value="ECO:0007669"/>
    <property type="project" value="InterPro"/>
</dbReference>
<dbReference type="GO" id="GO:0006351">
    <property type="term" value="P:DNA-templated transcription"/>
    <property type="evidence" value="ECO:0007669"/>
    <property type="project" value="UniProtKB-UniRule"/>
</dbReference>
<dbReference type="CDD" id="cd00653">
    <property type="entry name" value="RNA_pol_B_RPB2"/>
    <property type="match status" value="1"/>
</dbReference>
<dbReference type="Gene3D" id="2.40.50.100">
    <property type="match status" value="1"/>
</dbReference>
<dbReference type="Gene3D" id="2.40.50.150">
    <property type="match status" value="1"/>
</dbReference>
<dbReference type="Gene3D" id="3.90.1100.10">
    <property type="match status" value="3"/>
</dbReference>
<dbReference type="Gene3D" id="2.40.270.10">
    <property type="entry name" value="DNA-directed RNA polymerase, subunit 2, domain 6"/>
    <property type="match status" value="1"/>
</dbReference>
<dbReference type="Gene3D" id="3.90.1800.10">
    <property type="entry name" value="RNA polymerase alpha subunit dimerisation domain"/>
    <property type="match status" value="1"/>
</dbReference>
<dbReference type="Gene3D" id="3.90.1110.10">
    <property type="entry name" value="RNA polymerase Rpb2, domain 2"/>
    <property type="match status" value="1"/>
</dbReference>
<dbReference type="HAMAP" id="MF_01321">
    <property type="entry name" value="RNApol_bact_RpoB"/>
    <property type="match status" value="1"/>
</dbReference>
<dbReference type="InterPro" id="IPR019462">
    <property type="entry name" value="DNA-dir_RNA_pol_bsu_external_1"/>
</dbReference>
<dbReference type="InterPro" id="IPR015712">
    <property type="entry name" value="DNA-dir_RNA_pol_su2"/>
</dbReference>
<dbReference type="InterPro" id="IPR007120">
    <property type="entry name" value="DNA-dir_RNAP_su2_dom"/>
</dbReference>
<dbReference type="InterPro" id="IPR037033">
    <property type="entry name" value="DNA-dir_RNAP_su2_hyb_sf"/>
</dbReference>
<dbReference type="InterPro" id="IPR010243">
    <property type="entry name" value="RNA_pol_bsu_bac"/>
</dbReference>
<dbReference type="InterPro" id="IPR007121">
    <property type="entry name" value="RNA_pol_bsu_CS"/>
</dbReference>
<dbReference type="InterPro" id="IPR007644">
    <property type="entry name" value="RNA_pol_bsu_protrusion"/>
</dbReference>
<dbReference type="InterPro" id="IPR007642">
    <property type="entry name" value="RNA_pol_Rpb2_2"/>
</dbReference>
<dbReference type="InterPro" id="IPR037034">
    <property type="entry name" value="RNA_pol_Rpb2_2_sf"/>
</dbReference>
<dbReference type="InterPro" id="IPR007645">
    <property type="entry name" value="RNA_pol_Rpb2_3"/>
</dbReference>
<dbReference type="InterPro" id="IPR007641">
    <property type="entry name" value="RNA_pol_Rpb2_7"/>
</dbReference>
<dbReference type="InterPro" id="IPR014724">
    <property type="entry name" value="RNA_pol_RPB2_OB-fold"/>
</dbReference>
<dbReference type="NCBIfam" id="NF001616">
    <property type="entry name" value="PRK00405.1"/>
    <property type="match status" value="1"/>
</dbReference>
<dbReference type="NCBIfam" id="TIGR02013">
    <property type="entry name" value="rpoB"/>
    <property type="match status" value="1"/>
</dbReference>
<dbReference type="PANTHER" id="PTHR20856">
    <property type="entry name" value="DNA-DIRECTED RNA POLYMERASE I SUBUNIT 2"/>
    <property type="match status" value="1"/>
</dbReference>
<dbReference type="Pfam" id="PF04563">
    <property type="entry name" value="RNA_pol_Rpb2_1"/>
    <property type="match status" value="1"/>
</dbReference>
<dbReference type="Pfam" id="PF04561">
    <property type="entry name" value="RNA_pol_Rpb2_2"/>
    <property type="match status" value="2"/>
</dbReference>
<dbReference type="Pfam" id="PF04565">
    <property type="entry name" value="RNA_pol_Rpb2_3"/>
    <property type="match status" value="1"/>
</dbReference>
<dbReference type="Pfam" id="PF10385">
    <property type="entry name" value="RNA_pol_Rpb2_45"/>
    <property type="match status" value="1"/>
</dbReference>
<dbReference type="Pfam" id="PF00562">
    <property type="entry name" value="RNA_pol_Rpb2_6"/>
    <property type="match status" value="1"/>
</dbReference>
<dbReference type="Pfam" id="PF04560">
    <property type="entry name" value="RNA_pol_Rpb2_7"/>
    <property type="match status" value="1"/>
</dbReference>
<dbReference type="SUPFAM" id="SSF64484">
    <property type="entry name" value="beta and beta-prime subunits of DNA dependent RNA-polymerase"/>
    <property type="match status" value="1"/>
</dbReference>
<dbReference type="PROSITE" id="PS01166">
    <property type="entry name" value="RNA_POL_BETA"/>
    <property type="match status" value="1"/>
</dbReference>
<organism>
    <name type="scientific">Streptococcus mutans serotype c (strain ATCC 700610 / UA159)</name>
    <dbReference type="NCBI Taxonomy" id="210007"/>
    <lineage>
        <taxon>Bacteria</taxon>
        <taxon>Bacillati</taxon>
        <taxon>Bacillota</taxon>
        <taxon>Bacilli</taxon>
        <taxon>Lactobacillales</taxon>
        <taxon>Streptococcaceae</taxon>
        <taxon>Streptococcus</taxon>
    </lineage>
</organism>
<comment type="function">
    <text evidence="1">DNA-dependent RNA polymerase catalyzes the transcription of DNA into RNA using the four ribonucleoside triphosphates as substrates.</text>
</comment>
<comment type="catalytic activity">
    <reaction evidence="1">
        <text>RNA(n) + a ribonucleoside 5'-triphosphate = RNA(n+1) + diphosphate</text>
        <dbReference type="Rhea" id="RHEA:21248"/>
        <dbReference type="Rhea" id="RHEA-COMP:14527"/>
        <dbReference type="Rhea" id="RHEA-COMP:17342"/>
        <dbReference type="ChEBI" id="CHEBI:33019"/>
        <dbReference type="ChEBI" id="CHEBI:61557"/>
        <dbReference type="ChEBI" id="CHEBI:140395"/>
        <dbReference type="EC" id="2.7.7.6"/>
    </reaction>
</comment>
<comment type="subunit">
    <text evidence="1">The RNAP catalytic core consists of 2 alpha, 1 beta, 1 beta' and 1 omega subunit. When a sigma factor is associated with the core the holoenzyme is formed, which can initiate transcription.</text>
</comment>
<comment type="similarity">
    <text evidence="1">Belongs to the RNA polymerase beta chain family.</text>
</comment>